<reference key="1">
    <citation type="journal article" date="1994" name="Biochim. Biophys. Acta">
        <title>Isolation and characterisation of the linked genes, FPS1 and QCR8, coding for farnesyl-diphosphate synthase and the 11 kDa subunit VIII of the mitochondrial bc1-complex in the yeast Kluyveromyces lactis.</title>
        <authorList>
            <person name="Mulder W."/>
            <person name="Scholten I.H.J.M."/>
            <person name="Nagelkerken B."/>
            <person name="Grivell L.A."/>
        </authorList>
    </citation>
    <scope>NUCLEOTIDE SEQUENCE [GENOMIC DNA]</scope>
    <source>
        <strain>ATCC 8585 / CBS 2359 / DSM 70799 / NBRC 1267 / NRRL Y-1140 / WM37</strain>
    </source>
</reference>
<reference key="2">
    <citation type="journal article" date="2004" name="Nature">
        <title>Genome evolution in yeasts.</title>
        <authorList>
            <person name="Dujon B."/>
            <person name="Sherman D."/>
            <person name="Fischer G."/>
            <person name="Durrens P."/>
            <person name="Casaregola S."/>
            <person name="Lafontaine I."/>
            <person name="de Montigny J."/>
            <person name="Marck C."/>
            <person name="Neuveglise C."/>
            <person name="Talla E."/>
            <person name="Goffard N."/>
            <person name="Frangeul L."/>
            <person name="Aigle M."/>
            <person name="Anthouard V."/>
            <person name="Babour A."/>
            <person name="Barbe V."/>
            <person name="Barnay S."/>
            <person name="Blanchin S."/>
            <person name="Beckerich J.-M."/>
            <person name="Beyne E."/>
            <person name="Bleykasten C."/>
            <person name="Boisrame A."/>
            <person name="Boyer J."/>
            <person name="Cattolico L."/>
            <person name="Confanioleri F."/>
            <person name="de Daruvar A."/>
            <person name="Despons L."/>
            <person name="Fabre E."/>
            <person name="Fairhead C."/>
            <person name="Ferry-Dumazet H."/>
            <person name="Groppi A."/>
            <person name="Hantraye F."/>
            <person name="Hennequin C."/>
            <person name="Jauniaux N."/>
            <person name="Joyet P."/>
            <person name="Kachouri R."/>
            <person name="Kerrest A."/>
            <person name="Koszul R."/>
            <person name="Lemaire M."/>
            <person name="Lesur I."/>
            <person name="Ma L."/>
            <person name="Muller H."/>
            <person name="Nicaud J.-M."/>
            <person name="Nikolski M."/>
            <person name="Oztas S."/>
            <person name="Ozier-Kalogeropoulos O."/>
            <person name="Pellenz S."/>
            <person name="Potier S."/>
            <person name="Richard G.-F."/>
            <person name="Straub M.-L."/>
            <person name="Suleau A."/>
            <person name="Swennen D."/>
            <person name="Tekaia F."/>
            <person name="Wesolowski-Louvel M."/>
            <person name="Westhof E."/>
            <person name="Wirth B."/>
            <person name="Zeniou-Meyer M."/>
            <person name="Zivanovic Y."/>
            <person name="Bolotin-Fukuhara M."/>
            <person name="Thierry A."/>
            <person name="Bouchier C."/>
            <person name="Caudron B."/>
            <person name="Scarpelli C."/>
            <person name="Gaillardin C."/>
            <person name="Weissenbach J."/>
            <person name="Wincker P."/>
            <person name="Souciet J.-L."/>
        </authorList>
    </citation>
    <scope>NUCLEOTIDE SEQUENCE [LARGE SCALE GENOMIC DNA]</scope>
    <source>
        <strain>ATCC 8585 / CBS 2359 / DSM 70799 / NBRC 1267 / NRRL Y-1140 / WM37</strain>
    </source>
</reference>
<accession>P49346</accession>
<keyword id="KW-0249">Electron transport</keyword>
<keyword id="KW-0472">Membrane</keyword>
<keyword id="KW-0496">Mitochondrion</keyword>
<keyword id="KW-0999">Mitochondrion inner membrane</keyword>
<keyword id="KW-1185">Reference proteome</keyword>
<keyword id="KW-0679">Respiratory chain</keyword>
<keyword id="KW-0812">Transmembrane</keyword>
<keyword id="KW-1133">Transmembrane helix</keyword>
<keyword id="KW-0813">Transport</keyword>
<gene>
    <name type="primary">QCR8</name>
    <name type="ordered locus">KLLA0A06754g</name>
</gene>
<sequence>MGGPHAKAYMGWWGSIGSPAQKGITTYTVSPYAQKPLNNIFHNAVFNTFRRVKSQILYMALPAALYWAWWVNCRDYNAYLYTKAGREELERVNV</sequence>
<evidence type="ECO:0000250" key="1">
    <source>
        <dbReference type="UniProtKB" id="P08525"/>
    </source>
</evidence>
<evidence type="ECO:0000305" key="2"/>
<proteinExistence type="inferred from homology"/>
<name>QCR8_KLULA</name>
<comment type="function">
    <text evidence="1">Component of the ubiquinol-cytochrome c oxidoreductase, a multisubunit transmembrane complex that is part of the mitochondrial electron transport chain which drives oxidative phosphorylation. The respiratory chain contains 3 multisubunit complexes succinate dehydrogenase (complex II, CII), ubiquinol-cytochrome c oxidoreductase (cytochrome b-c1 complex, complex III, CIII) and cytochrome c oxidase (complex IV, CIV), that cooperate to transfer electrons derived from NADH and succinate to molecular oxygen, creating an electrochemical gradient over the inner membrane that drives transmembrane transport and the ATP synthase. The cytochrome b-c1 complex catalyzes electron transfer from ubiquinol to cytochrome c, linking this redox reaction to translocation of protons across the mitochondrial inner membrane, with protons being carried across the membrane as hydrogens on the quinol. In the process called Q cycle, 2 protons are consumed from the matrix, 4 protons are released into the intermembrane space and 2 electrons are passed to cytochrome c.</text>
</comment>
<comment type="subunit">
    <text evidence="1">Component of the ubiquinol-cytochrome c oxidoreductase (cytochrome b-c1 complex, complex III, CIII), a multisubunit enzyme composed of 3 respiratory subunits cytochrome b, cytochrome c1 and Rieske protein, 2 core protein subunits, and additional low-molecular weight protein subunits. The complex exists as an obligatory dimer and forms supercomplexes (SCs) in the inner mitochondrial membrane with cytochrome c oxidase (complex IV, CIV).</text>
</comment>
<comment type="subcellular location">
    <subcellularLocation>
        <location evidence="1">Mitochondrion inner membrane</location>
        <topology evidence="1">Single-pass membrane protein</topology>
    </subcellularLocation>
</comment>
<comment type="similarity">
    <text evidence="2">Belongs to the UQCRQ/QCR8 family.</text>
</comment>
<dbReference type="EMBL" id="X76026">
    <property type="protein sequence ID" value="CAA53615.1"/>
    <property type="molecule type" value="Genomic_DNA"/>
</dbReference>
<dbReference type="EMBL" id="CR382121">
    <property type="protein sequence ID" value="CAH02889.1"/>
    <property type="molecule type" value="Genomic_DNA"/>
</dbReference>
<dbReference type="PIR" id="S50215">
    <property type="entry name" value="S50215"/>
</dbReference>
<dbReference type="RefSeq" id="XP_451301.1">
    <property type="nucleotide sequence ID" value="XM_451301.1"/>
</dbReference>
<dbReference type="SMR" id="P49346"/>
<dbReference type="FunCoup" id="P49346">
    <property type="interactions" value="117"/>
</dbReference>
<dbReference type="STRING" id="284590.P49346"/>
<dbReference type="PaxDb" id="284590-P49346"/>
<dbReference type="KEGG" id="kla:KLLA0_A06754g"/>
<dbReference type="eggNOG" id="KOG4116">
    <property type="taxonomic scope" value="Eukaryota"/>
</dbReference>
<dbReference type="HOGENOM" id="CLU_156007_0_1_1"/>
<dbReference type="InParanoid" id="P49346"/>
<dbReference type="OMA" id="AGIYWYW"/>
<dbReference type="Proteomes" id="UP000000598">
    <property type="component" value="Chromosome A"/>
</dbReference>
<dbReference type="GO" id="GO:0005743">
    <property type="term" value="C:mitochondrial inner membrane"/>
    <property type="evidence" value="ECO:0007669"/>
    <property type="project" value="UniProtKB-SubCell"/>
</dbReference>
<dbReference type="GO" id="GO:0045275">
    <property type="term" value="C:respiratory chain complex III"/>
    <property type="evidence" value="ECO:0007669"/>
    <property type="project" value="InterPro"/>
</dbReference>
<dbReference type="GO" id="GO:0006122">
    <property type="term" value="P:mitochondrial electron transport, ubiquinol to cytochrome c"/>
    <property type="evidence" value="ECO:0007669"/>
    <property type="project" value="InterPro"/>
</dbReference>
<dbReference type="FunFam" id="1.20.5.210:FF:000001">
    <property type="entry name" value="Cytochrome b-c1 complex subunit 8"/>
    <property type="match status" value="1"/>
</dbReference>
<dbReference type="Gene3D" id="1.20.5.210">
    <property type="entry name" value="Cytochrome b-c1 complex subunit 8"/>
    <property type="match status" value="1"/>
</dbReference>
<dbReference type="InterPro" id="IPR004205">
    <property type="entry name" value="Cyt_bc1_su8"/>
</dbReference>
<dbReference type="InterPro" id="IPR036642">
    <property type="entry name" value="Cyt_bc1_su8_sf"/>
</dbReference>
<dbReference type="PANTHER" id="PTHR12119:SF2">
    <property type="entry name" value="CYTOCHROME B-C1 COMPLEX SUBUNIT 8"/>
    <property type="match status" value="1"/>
</dbReference>
<dbReference type="PANTHER" id="PTHR12119">
    <property type="entry name" value="UBIQUINOL-CYTOCHROME C REDUCTASE COMPLEX UBIQUINONE-BINDING PROTEIN QP-C"/>
    <property type="match status" value="1"/>
</dbReference>
<dbReference type="Pfam" id="PF02939">
    <property type="entry name" value="UcrQ"/>
    <property type="match status" value="1"/>
</dbReference>
<dbReference type="SUPFAM" id="SSF81508">
    <property type="entry name" value="Ubiquinone-binding protein QP-C of cytochrome bc1 complex (Ubiquinol-cytochrome c reductase)"/>
    <property type="match status" value="1"/>
</dbReference>
<protein>
    <recommendedName>
        <fullName>Cytochrome b-c1 complex subunit 8</fullName>
    </recommendedName>
    <alternativeName>
        <fullName>Complex III subunit 8</fullName>
    </alternativeName>
    <alternativeName>
        <fullName>Complex III subunit VII</fullName>
    </alternativeName>
    <alternativeName>
        <fullName>Ubiquinol-cytochrome c reductase complex 11 kDa protein</fullName>
    </alternativeName>
    <alternativeName>
        <fullName>Ubiquinol-cytochrome c reductase complex ubiquinone-binding protein QP-C</fullName>
    </alternativeName>
</protein>
<feature type="chain" id="PRO_0000193549" description="Cytochrome b-c1 complex subunit 8">
    <location>
        <begin position="1"/>
        <end position="94"/>
    </location>
</feature>
<feature type="topological domain" description="Mitochondrial matrix" evidence="1">
    <location>
        <begin position="1"/>
        <end position="49"/>
    </location>
</feature>
<feature type="transmembrane region" description="Helical" evidence="1">
    <location>
        <begin position="50"/>
        <end position="80"/>
    </location>
</feature>
<feature type="topological domain" description="Mitochondrial intermembrane" evidence="1">
    <location>
        <begin position="81"/>
        <end position="94"/>
    </location>
</feature>
<organism>
    <name type="scientific">Kluyveromyces lactis (strain ATCC 8585 / CBS 2359 / DSM 70799 / NBRC 1267 / NRRL Y-1140 / WM37)</name>
    <name type="common">Yeast</name>
    <name type="synonym">Candida sphaerica</name>
    <dbReference type="NCBI Taxonomy" id="284590"/>
    <lineage>
        <taxon>Eukaryota</taxon>
        <taxon>Fungi</taxon>
        <taxon>Dikarya</taxon>
        <taxon>Ascomycota</taxon>
        <taxon>Saccharomycotina</taxon>
        <taxon>Saccharomycetes</taxon>
        <taxon>Saccharomycetales</taxon>
        <taxon>Saccharomycetaceae</taxon>
        <taxon>Kluyveromyces</taxon>
    </lineage>
</organism>